<accession>A8ZV25</accession>
<keyword id="KW-0004">4Fe-4S</keyword>
<keyword id="KW-0963">Cytoplasm</keyword>
<keyword id="KW-1015">Disulfide bond</keyword>
<keyword id="KW-0408">Iron</keyword>
<keyword id="KW-0411">Iron-sulfur</keyword>
<keyword id="KW-0479">Metal-binding</keyword>
<keyword id="KW-0489">Methyltransferase</keyword>
<keyword id="KW-1185">Reference proteome</keyword>
<keyword id="KW-0698">rRNA processing</keyword>
<keyword id="KW-0949">S-adenosyl-L-methionine</keyword>
<keyword id="KW-0808">Transferase</keyword>
<keyword id="KW-0819">tRNA processing</keyword>
<protein>
    <recommendedName>
        <fullName evidence="1">Dual-specificity RNA methyltransferase RlmN</fullName>
        <ecNumber evidence="1">2.1.1.192</ecNumber>
    </recommendedName>
    <alternativeName>
        <fullName evidence="1">23S rRNA (adenine(2503)-C(2))-methyltransferase</fullName>
    </alternativeName>
    <alternativeName>
        <fullName evidence="1">23S rRNA m2A2503 methyltransferase</fullName>
    </alternativeName>
    <alternativeName>
        <fullName evidence="1">Ribosomal RNA large subunit methyltransferase N</fullName>
    </alternativeName>
    <alternativeName>
        <fullName evidence="1">tRNA (adenine(37)-C(2))-methyltransferase</fullName>
    </alternativeName>
    <alternativeName>
        <fullName evidence="1">tRNA m2A37 methyltransferase</fullName>
    </alternativeName>
</protein>
<reference key="1">
    <citation type="submission" date="2007-10" db="EMBL/GenBank/DDBJ databases">
        <title>Complete sequence of Desulfococcus oleovorans Hxd3.</title>
        <authorList>
            <consortium name="US DOE Joint Genome Institute"/>
            <person name="Copeland A."/>
            <person name="Lucas S."/>
            <person name="Lapidus A."/>
            <person name="Barry K."/>
            <person name="Glavina del Rio T."/>
            <person name="Dalin E."/>
            <person name="Tice H."/>
            <person name="Pitluck S."/>
            <person name="Kiss H."/>
            <person name="Brettin T."/>
            <person name="Bruce D."/>
            <person name="Detter J.C."/>
            <person name="Han C."/>
            <person name="Schmutz J."/>
            <person name="Larimer F."/>
            <person name="Land M."/>
            <person name="Hauser L."/>
            <person name="Kyrpides N."/>
            <person name="Kim E."/>
            <person name="Wawrik B."/>
            <person name="Richardson P."/>
        </authorList>
    </citation>
    <scope>NUCLEOTIDE SEQUENCE [LARGE SCALE GENOMIC DNA]</scope>
    <source>
        <strain>DSM 6200 / JCM 39069 / Hxd3</strain>
    </source>
</reference>
<comment type="function">
    <text evidence="1">Specifically methylates position 2 of adenine 2503 in 23S rRNA and position 2 of adenine 37 in tRNAs. m2A2503 modification seems to play a crucial role in the proofreading step occurring at the peptidyl transferase center and thus would serve to optimize ribosomal fidelity.</text>
</comment>
<comment type="catalytic activity">
    <reaction evidence="1">
        <text>adenosine(2503) in 23S rRNA + 2 reduced [2Fe-2S]-[ferredoxin] + 2 S-adenosyl-L-methionine = 2-methyladenosine(2503) in 23S rRNA + 5'-deoxyadenosine + L-methionine + 2 oxidized [2Fe-2S]-[ferredoxin] + S-adenosyl-L-homocysteine</text>
        <dbReference type="Rhea" id="RHEA:42916"/>
        <dbReference type="Rhea" id="RHEA-COMP:10000"/>
        <dbReference type="Rhea" id="RHEA-COMP:10001"/>
        <dbReference type="Rhea" id="RHEA-COMP:10152"/>
        <dbReference type="Rhea" id="RHEA-COMP:10282"/>
        <dbReference type="ChEBI" id="CHEBI:17319"/>
        <dbReference type="ChEBI" id="CHEBI:33737"/>
        <dbReference type="ChEBI" id="CHEBI:33738"/>
        <dbReference type="ChEBI" id="CHEBI:57844"/>
        <dbReference type="ChEBI" id="CHEBI:57856"/>
        <dbReference type="ChEBI" id="CHEBI:59789"/>
        <dbReference type="ChEBI" id="CHEBI:74411"/>
        <dbReference type="ChEBI" id="CHEBI:74497"/>
        <dbReference type="EC" id="2.1.1.192"/>
    </reaction>
</comment>
<comment type="catalytic activity">
    <reaction evidence="1">
        <text>adenosine(37) in tRNA + 2 reduced [2Fe-2S]-[ferredoxin] + 2 S-adenosyl-L-methionine = 2-methyladenosine(37) in tRNA + 5'-deoxyadenosine + L-methionine + 2 oxidized [2Fe-2S]-[ferredoxin] + S-adenosyl-L-homocysteine</text>
        <dbReference type="Rhea" id="RHEA:43332"/>
        <dbReference type="Rhea" id="RHEA-COMP:10000"/>
        <dbReference type="Rhea" id="RHEA-COMP:10001"/>
        <dbReference type="Rhea" id="RHEA-COMP:10162"/>
        <dbReference type="Rhea" id="RHEA-COMP:10485"/>
        <dbReference type="ChEBI" id="CHEBI:17319"/>
        <dbReference type="ChEBI" id="CHEBI:33737"/>
        <dbReference type="ChEBI" id="CHEBI:33738"/>
        <dbReference type="ChEBI" id="CHEBI:57844"/>
        <dbReference type="ChEBI" id="CHEBI:57856"/>
        <dbReference type="ChEBI" id="CHEBI:59789"/>
        <dbReference type="ChEBI" id="CHEBI:74411"/>
        <dbReference type="ChEBI" id="CHEBI:74497"/>
        <dbReference type="EC" id="2.1.1.192"/>
    </reaction>
</comment>
<comment type="cofactor">
    <cofactor evidence="1">
        <name>[4Fe-4S] cluster</name>
        <dbReference type="ChEBI" id="CHEBI:49883"/>
    </cofactor>
    <text evidence="1">Binds 1 [4Fe-4S] cluster. The cluster is coordinated with 3 cysteines and an exchangeable S-adenosyl-L-methionine.</text>
</comment>
<comment type="subcellular location">
    <subcellularLocation>
        <location evidence="1">Cytoplasm</location>
    </subcellularLocation>
</comment>
<comment type="miscellaneous">
    <text evidence="1">Reaction proceeds by a ping-pong mechanism involving intermediate methylation of a conserved cysteine residue.</text>
</comment>
<comment type="similarity">
    <text evidence="1">Belongs to the radical SAM superfamily. RlmN family.</text>
</comment>
<evidence type="ECO:0000255" key="1">
    <source>
        <dbReference type="HAMAP-Rule" id="MF_01849"/>
    </source>
</evidence>
<evidence type="ECO:0000255" key="2">
    <source>
        <dbReference type="PROSITE-ProRule" id="PRU01266"/>
    </source>
</evidence>
<sequence>MSRNLYYTGPPKFIIKGIMNSTALPQEIQNLTRARFADWLNAHNIAPYRADQVFKWLFVHRAESFDQMTNISKPVRTLLAESFIIGRLKIARTQQSADGTRKYLFELSDGEHIESVLIPEEDHFTLCVSTQVGCAQGCAFCMTAKKGFVRNLTPAEITGQVLGALKTLAPEERLTNIVLMGMGEPLANYDNVITSLDTICDGDCGLQFSTRRVTLSTSGLVPRMAPLGLATTVNLAVSLNATDNKTRDMLMPINKTYPIEVLLEACRTYPLSNRRKITFEYILMAGVNDSEKDALRLVKLLRSIKAKVNLIPFNEHEGAAFKRPDDAAIERFKQILHDRQYTVMTRQSKGADISAACGQLAADIKKYGQNK</sequence>
<proteinExistence type="inferred from homology"/>
<name>RLMN_DESOH</name>
<organism>
    <name type="scientific">Desulfosudis oleivorans (strain DSM 6200 / JCM 39069 / Hxd3)</name>
    <name type="common">Desulfococcus oleovorans</name>
    <dbReference type="NCBI Taxonomy" id="96561"/>
    <lineage>
        <taxon>Bacteria</taxon>
        <taxon>Pseudomonadati</taxon>
        <taxon>Thermodesulfobacteriota</taxon>
        <taxon>Desulfobacteria</taxon>
        <taxon>Desulfobacterales</taxon>
        <taxon>Desulfosudaceae</taxon>
        <taxon>Desulfosudis</taxon>
    </lineage>
</organism>
<feature type="chain" id="PRO_0000350150" description="Dual-specificity RNA methyltransferase RlmN">
    <location>
        <begin position="1"/>
        <end position="371"/>
    </location>
</feature>
<feature type="domain" description="Radical SAM core" evidence="2">
    <location>
        <begin position="120"/>
        <end position="352"/>
    </location>
</feature>
<feature type="active site" description="Proton acceptor" evidence="1">
    <location>
        <position position="114"/>
    </location>
</feature>
<feature type="active site" description="S-methylcysteine intermediate" evidence="1">
    <location>
        <position position="357"/>
    </location>
</feature>
<feature type="binding site" evidence="1">
    <location>
        <position position="134"/>
    </location>
    <ligand>
        <name>[4Fe-4S] cluster</name>
        <dbReference type="ChEBI" id="CHEBI:49883"/>
        <note>4Fe-4S-S-AdoMet</note>
    </ligand>
</feature>
<feature type="binding site" evidence="1">
    <location>
        <position position="138"/>
    </location>
    <ligand>
        <name>[4Fe-4S] cluster</name>
        <dbReference type="ChEBI" id="CHEBI:49883"/>
        <note>4Fe-4S-S-AdoMet</note>
    </ligand>
</feature>
<feature type="binding site" evidence="1">
    <location>
        <position position="141"/>
    </location>
    <ligand>
        <name>[4Fe-4S] cluster</name>
        <dbReference type="ChEBI" id="CHEBI:49883"/>
        <note>4Fe-4S-S-AdoMet</note>
    </ligand>
</feature>
<feature type="binding site" evidence="1">
    <location>
        <begin position="183"/>
        <end position="184"/>
    </location>
    <ligand>
        <name>S-adenosyl-L-methionine</name>
        <dbReference type="ChEBI" id="CHEBI:59789"/>
    </ligand>
</feature>
<feature type="binding site" evidence="1">
    <location>
        <position position="216"/>
    </location>
    <ligand>
        <name>S-adenosyl-L-methionine</name>
        <dbReference type="ChEBI" id="CHEBI:59789"/>
    </ligand>
</feature>
<feature type="binding site" evidence="1">
    <location>
        <begin position="238"/>
        <end position="240"/>
    </location>
    <ligand>
        <name>S-adenosyl-L-methionine</name>
        <dbReference type="ChEBI" id="CHEBI:59789"/>
    </ligand>
</feature>
<feature type="binding site" evidence="1">
    <location>
        <position position="314"/>
    </location>
    <ligand>
        <name>S-adenosyl-L-methionine</name>
        <dbReference type="ChEBI" id="CHEBI:59789"/>
    </ligand>
</feature>
<feature type="disulfide bond" description="(transient)" evidence="1">
    <location>
        <begin position="127"/>
        <end position="357"/>
    </location>
</feature>
<gene>
    <name evidence="1" type="primary">rlmN</name>
    <name type="ordered locus">Dole_2311</name>
</gene>
<dbReference type="EC" id="2.1.1.192" evidence="1"/>
<dbReference type="EMBL" id="CP000859">
    <property type="protein sequence ID" value="ABW68115.1"/>
    <property type="molecule type" value="Genomic_DNA"/>
</dbReference>
<dbReference type="SMR" id="A8ZV25"/>
<dbReference type="STRING" id="96561.Dole_2311"/>
<dbReference type="KEGG" id="dol:Dole_2311"/>
<dbReference type="eggNOG" id="COG0820">
    <property type="taxonomic scope" value="Bacteria"/>
</dbReference>
<dbReference type="HOGENOM" id="CLU_029101_2_0_7"/>
<dbReference type="OrthoDB" id="9793973at2"/>
<dbReference type="Proteomes" id="UP000008561">
    <property type="component" value="Chromosome"/>
</dbReference>
<dbReference type="GO" id="GO:0005737">
    <property type="term" value="C:cytoplasm"/>
    <property type="evidence" value="ECO:0007669"/>
    <property type="project" value="UniProtKB-SubCell"/>
</dbReference>
<dbReference type="GO" id="GO:0051539">
    <property type="term" value="F:4 iron, 4 sulfur cluster binding"/>
    <property type="evidence" value="ECO:0007669"/>
    <property type="project" value="UniProtKB-UniRule"/>
</dbReference>
<dbReference type="GO" id="GO:0046872">
    <property type="term" value="F:metal ion binding"/>
    <property type="evidence" value="ECO:0007669"/>
    <property type="project" value="UniProtKB-KW"/>
</dbReference>
<dbReference type="GO" id="GO:0070040">
    <property type="term" value="F:rRNA (adenine(2503)-C2-)-methyltransferase activity"/>
    <property type="evidence" value="ECO:0007669"/>
    <property type="project" value="UniProtKB-UniRule"/>
</dbReference>
<dbReference type="GO" id="GO:0019843">
    <property type="term" value="F:rRNA binding"/>
    <property type="evidence" value="ECO:0007669"/>
    <property type="project" value="UniProtKB-UniRule"/>
</dbReference>
<dbReference type="GO" id="GO:0002935">
    <property type="term" value="F:tRNA (adenine(37)-C2)-methyltransferase activity"/>
    <property type="evidence" value="ECO:0007669"/>
    <property type="project" value="UniProtKB-UniRule"/>
</dbReference>
<dbReference type="GO" id="GO:0000049">
    <property type="term" value="F:tRNA binding"/>
    <property type="evidence" value="ECO:0007669"/>
    <property type="project" value="UniProtKB-UniRule"/>
</dbReference>
<dbReference type="GO" id="GO:0070475">
    <property type="term" value="P:rRNA base methylation"/>
    <property type="evidence" value="ECO:0007669"/>
    <property type="project" value="UniProtKB-UniRule"/>
</dbReference>
<dbReference type="GO" id="GO:0030488">
    <property type="term" value="P:tRNA methylation"/>
    <property type="evidence" value="ECO:0007669"/>
    <property type="project" value="UniProtKB-UniRule"/>
</dbReference>
<dbReference type="CDD" id="cd01335">
    <property type="entry name" value="Radical_SAM"/>
    <property type="match status" value="1"/>
</dbReference>
<dbReference type="FunFam" id="3.20.20.70:FF:000014">
    <property type="entry name" value="Probable dual-specificity RNA methyltransferase RlmN"/>
    <property type="match status" value="1"/>
</dbReference>
<dbReference type="Gene3D" id="1.10.150.530">
    <property type="match status" value="1"/>
</dbReference>
<dbReference type="Gene3D" id="3.20.20.70">
    <property type="entry name" value="Aldolase class I"/>
    <property type="match status" value="1"/>
</dbReference>
<dbReference type="HAMAP" id="MF_01849">
    <property type="entry name" value="RNA_methyltr_RlmN"/>
    <property type="match status" value="1"/>
</dbReference>
<dbReference type="InterPro" id="IPR013785">
    <property type="entry name" value="Aldolase_TIM"/>
</dbReference>
<dbReference type="InterPro" id="IPR006638">
    <property type="entry name" value="Elp3/MiaA/NifB-like_rSAM"/>
</dbReference>
<dbReference type="InterPro" id="IPR040072">
    <property type="entry name" value="Methyltransferase_A"/>
</dbReference>
<dbReference type="InterPro" id="IPR048641">
    <property type="entry name" value="RlmN_N"/>
</dbReference>
<dbReference type="InterPro" id="IPR027492">
    <property type="entry name" value="RNA_MTrfase_RlmN"/>
</dbReference>
<dbReference type="InterPro" id="IPR004383">
    <property type="entry name" value="rRNA_lsu_MTrfase_RlmN/Cfr"/>
</dbReference>
<dbReference type="InterPro" id="IPR007197">
    <property type="entry name" value="rSAM"/>
</dbReference>
<dbReference type="NCBIfam" id="TIGR00048">
    <property type="entry name" value="rRNA_mod_RlmN"/>
    <property type="match status" value="1"/>
</dbReference>
<dbReference type="PANTHER" id="PTHR30544">
    <property type="entry name" value="23S RRNA METHYLTRANSFERASE"/>
    <property type="match status" value="1"/>
</dbReference>
<dbReference type="PANTHER" id="PTHR30544:SF5">
    <property type="entry name" value="RADICAL SAM CORE DOMAIN-CONTAINING PROTEIN"/>
    <property type="match status" value="1"/>
</dbReference>
<dbReference type="Pfam" id="PF04055">
    <property type="entry name" value="Radical_SAM"/>
    <property type="match status" value="1"/>
</dbReference>
<dbReference type="Pfam" id="PF21016">
    <property type="entry name" value="RlmN_N"/>
    <property type="match status" value="1"/>
</dbReference>
<dbReference type="PIRSF" id="PIRSF006004">
    <property type="entry name" value="CHP00048"/>
    <property type="match status" value="1"/>
</dbReference>
<dbReference type="SFLD" id="SFLDF00275">
    <property type="entry name" value="adenosine_C2_methyltransferase"/>
    <property type="match status" value="1"/>
</dbReference>
<dbReference type="SFLD" id="SFLDG01062">
    <property type="entry name" value="methyltransferase_(Class_A)"/>
    <property type="match status" value="1"/>
</dbReference>
<dbReference type="SMART" id="SM00729">
    <property type="entry name" value="Elp3"/>
    <property type="match status" value="1"/>
</dbReference>
<dbReference type="SUPFAM" id="SSF102114">
    <property type="entry name" value="Radical SAM enzymes"/>
    <property type="match status" value="1"/>
</dbReference>
<dbReference type="PROSITE" id="PS51918">
    <property type="entry name" value="RADICAL_SAM"/>
    <property type="match status" value="1"/>
</dbReference>